<proteinExistence type="inferred from homology"/>
<organism>
    <name type="scientific">Marinobacter nauticus (strain ATCC 700491 / DSM 11845 / VT8)</name>
    <name type="common">Marinobacter aquaeolei</name>
    <dbReference type="NCBI Taxonomy" id="351348"/>
    <lineage>
        <taxon>Bacteria</taxon>
        <taxon>Pseudomonadati</taxon>
        <taxon>Pseudomonadota</taxon>
        <taxon>Gammaproteobacteria</taxon>
        <taxon>Pseudomonadales</taxon>
        <taxon>Marinobacteraceae</taxon>
        <taxon>Marinobacter</taxon>
    </lineage>
</organism>
<protein>
    <recommendedName>
        <fullName evidence="1">Elongation factor Ts</fullName>
        <shortName evidence="1">EF-Ts</shortName>
    </recommendedName>
</protein>
<accession>A1U3Q3</accession>
<reference key="1">
    <citation type="journal article" date="2011" name="Appl. Environ. Microbiol.">
        <title>Genomic potential of Marinobacter aquaeolei, a biogeochemical 'opportunitroph'.</title>
        <authorList>
            <person name="Singer E."/>
            <person name="Webb E.A."/>
            <person name="Nelson W.C."/>
            <person name="Heidelberg J.F."/>
            <person name="Ivanova N."/>
            <person name="Pati A."/>
            <person name="Edwards K.J."/>
        </authorList>
    </citation>
    <scope>NUCLEOTIDE SEQUENCE [LARGE SCALE GENOMIC DNA]</scope>
    <source>
        <strain>ATCC 700491 / DSM 11845 / VT8</strain>
    </source>
</reference>
<gene>
    <name evidence="1" type="primary">tsf</name>
    <name type="ordered locus">Maqu_2547</name>
</gene>
<dbReference type="EMBL" id="CP000514">
    <property type="protein sequence ID" value="ABM19622.1"/>
    <property type="status" value="ALT_INIT"/>
    <property type="molecule type" value="Genomic_DNA"/>
</dbReference>
<dbReference type="RefSeq" id="WP_014421998.1">
    <property type="nucleotide sequence ID" value="NC_008740.1"/>
</dbReference>
<dbReference type="SMR" id="A1U3Q3"/>
<dbReference type="STRING" id="351348.Maqu_2547"/>
<dbReference type="GeneID" id="31821871"/>
<dbReference type="KEGG" id="maq:Maqu_2547"/>
<dbReference type="eggNOG" id="COG0264">
    <property type="taxonomic scope" value="Bacteria"/>
</dbReference>
<dbReference type="HOGENOM" id="CLU_047155_0_2_6"/>
<dbReference type="OrthoDB" id="9808348at2"/>
<dbReference type="Proteomes" id="UP000000998">
    <property type="component" value="Chromosome"/>
</dbReference>
<dbReference type="GO" id="GO:0005737">
    <property type="term" value="C:cytoplasm"/>
    <property type="evidence" value="ECO:0007669"/>
    <property type="project" value="UniProtKB-SubCell"/>
</dbReference>
<dbReference type="GO" id="GO:0003746">
    <property type="term" value="F:translation elongation factor activity"/>
    <property type="evidence" value="ECO:0007669"/>
    <property type="project" value="UniProtKB-UniRule"/>
</dbReference>
<dbReference type="CDD" id="cd14275">
    <property type="entry name" value="UBA_EF-Ts"/>
    <property type="match status" value="1"/>
</dbReference>
<dbReference type="FunFam" id="1.10.286.20:FF:000001">
    <property type="entry name" value="Elongation factor Ts"/>
    <property type="match status" value="1"/>
</dbReference>
<dbReference type="FunFam" id="1.10.8.10:FF:000001">
    <property type="entry name" value="Elongation factor Ts"/>
    <property type="match status" value="1"/>
</dbReference>
<dbReference type="Gene3D" id="1.10.286.20">
    <property type="match status" value="1"/>
</dbReference>
<dbReference type="Gene3D" id="1.10.8.10">
    <property type="entry name" value="DNA helicase RuvA subunit, C-terminal domain"/>
    <property type="match status" value="1"/>
</dbReference>
<dbReference type="Gene3D" id="3.30.479.20">
    <property type="entry name" value="Elongation factor Ts, dimerisation domain"/>
    <property type="match status" value="2"/>
</dbReference>
<dbReference type="HAMAP" id="MF_00050">
    <property type="entry name" value="EF_Ts"/>
    <property type="match status" value="1"/>
</dbReference>
<dbReference type="InterPro" id="IPR036402">
    <property type="entry name" value="EF-Ts_dimer_sf"/>
</dbReference>
<dbReference type="InterPro" id="IPR001816">
    <property type="entry name" value="Transl_elong_EFTs/EF1B"/>
</dbReference>
<dbReference type="InterPro" id="IPR014039">
    <property type="entry name" value="Transl_elong_EFTs/EF1B_dimer"/>
</dbReference>
<dbReference type="InterPro" id="IPR018101">
    <property type="entry name" value="Transl_elong_Ts_CS"/>
</dbReference>
<dbReference type="InterPro" id="IPR009060">
    <property type="entry name" value="UBA-like_sf"/>
</dbReference>
<dbReference type="NCBIfam" id="TIGR00116">
    <property type="entry name" value="tsf"/>
    <property type="match status" value="1"/>
</dbReference>
<dbReference type="PANTHER" id="PTHR11741">
    <property type="entry name" value="ELONGATION FACTOR TS"/>
    <property type="match status" value="1"/>
</dbReference>
<dbReference type="PANTHER" id="PTHR11741:SF0">
    <property type="entry name" value="ELONGATION FACTOR TS, MITOCHONDRIAL"/>
    <property type="match status" value="1"/>
</dbReference>
<dbReference type="Pfam" id="PF00889">
    <property type="entry name" value="EF_TS"/>
    <property type="match status" value="1"/>
</dbReference>
<dbReference type="SUPFAM" id="SSF54713">
    <property type="entry name" value="Elongation factor Ts (EF-Ts), dimerisation domain"/>
    <property type="match status" value="2"/>
</dbReference>
<dbReference type="SUPFAM" id="SSF46934">
    <property type="entry name" value="UBA-like"/>
    <property type="match status" value="1"/>
</dbReference>
<dbReference type="PROSITE" id="PS01126">
    <property type="entry name" value="EF_TS_1"/>
    <property type="match status" value="1"/>
</dbReference>
<dbReference type="PROSITE" id="PS01127">
    <property type="entry name" value="EF_TS_2"/>
    <property type="match status" value="1"/>
</dbReference>
<evidence type="ECO:0000255" key="1">
    <source>
        <dbReference type="HAMAP-Rule" id="MF_00050"/>
    </source>
</evidence>
<evidence type="ECO:0000305" key="2"/>
<name>EFTS_MARN8</name>
<keyword id="KW-0963">Cytoplasm</keyword>
<keyword id="KW-0251">Elongation factor</keyword>
<keyword id="KW-0648">Protein biosynthesis</keyword>
<comment type="function">
    <text evidence="1">Associates with the EF-Tu.GDP complex and induces the exchange of GDP to GTP. It remains bound to the aminoacyl-tRNA.EF-Tu.GTP complex up to the GTP hydrolysis stage on the ribosome.</text>
</comment>
<comment type="subcellular location">
    <subcellularLocation>
        <location evidence="1">Cytoplasm</location>
    </subcellularLocation>
</comment>
<comment type="similarity">
    <text evidence="1">Belongs to the EF-Ts family.</text>
</comment>
<comment type="sequence caution" evidence="2">
    <conflict type="erroneous initiation">
        <sequence resource="EMBL-CDS" id="ABM19622"/>
    </conflict>
</comment>
<feature type="chain" id="PRO_0000323456" description="Elongation factor Ts">
    <location>
        <begin position="1"/>
        <end position="289"/>
    </location>
</feature>
<feature type="region of interest" description="Involved in Mg(2+) ion dislocation from EF-Tu" evidence="1">
    <location>
        <begin position="82"/>
        <end position="85"/>
    </location>
</feature>
<sequence>MAAITAAMVKELRERTGLGMMECKKALVEAEGNVETAIEELRKSSGLKAAKKAGRTAAEGVSLVKVSDDNTVAFILEVNSETDFVARDDNFMNFANDVLNVAFEKGETDVAKLMEGDLEAKREALVQKIGENITVRRIIKVEGPVVGGYVHSNNKIASVVALTAGNEELARDIAMHVAAVNPRVGKPDDMPAEELEKEKEIIKAQPDMEGKPAEIVEKMMGGRIKKFLAENSLVEQPFVKNPDQKVGDLIKSAGGDLVGFIRLEVGEGIEKEEVDFAAEVAAAAGTGKA</sequence>